<evidence type="ECO:0000255" key="1"/>
<evidence type="ECO:0000305" key="2"/>
<proteinExistence type="evidence at transcript level"/>
<feature type="chain" id="PRO_0000064061" description="Aquaporin PIP-type">
    <location>
        <begin position="1"/>
        <end position="282"/>
    </location>
</feature>
<feature type="transmembrane region" description="Helical; Name=1" evidence="1">
    <location>
        <begin position="39"/>
        <end position="61"/>
    </location>
</feature>
<feature type="transmembrane region" description="Helical; Name=2" evidence="1">
    <location>
        <begin position="74"/>
        <end position="96"/>
    </location>
</feature>
<feature type="transmembrane region" description="Helical; Name=3" evidence="1">
    <location>
        <begin position="116"/>
        <end position="138"/>
    </location>
</feature>
<feature type="transmembrane region" description="Helical; Name=4" evidence="1">
    <location>
        <begin position="159"/>
        <end position="181"/>
    </location>
</feature>
<feature type="transmembrane region" description="Helical; Name=5" evidence="1">
    <location>
        <begin position="201"/>
        <end position="223"/>
    </location>
</feature>
<feature type="transmembrane region" description="Helical; Name=6" evidence="1">
    <location>
        <begin position="243"/>
        <end position="265"/>
    </location>
</feature>
<feature type="short sequence motif" description="NPA 1">
    <location>
        <begin position="102"/>
        <end position="104"/>
    </location>
</feature>
<feature type="short sequence motif" description="NPA 2">
    <location>
        <begin position="223"/>
        <end position="225"/>
    </location>
</feature>
<organism>
    <name type="scientific">Atriplex canescens</name>
    <name type="common">Fourwing saltbush</name>
    <name type="synonym">Calligonum canescens</name>
    <dbReference type="NCBI Taxonomy" id="35922"/>
    <lineage>
        <taxon>Eukaryota</taxon>
        <taxon>Viridiplantae</taxon>
        <taxon>Streptophyta</taxon>
        <taxon>Embryophyta</taxon>
        <taxon>Tracheophyta</taxon>
        <taxon>Spermatophyta</taxon>
        <taxon>Magnoliopsida</taxon>
        <taxon>eudicotyledons</taxon>
        <taxon>Gunneridae</taxon>
        <taxon>Pentapetalae</taxon>
        <taxon>Caryophyllales</taxon>
        <taxon>Chenopodiaceae</taxon>
        <taxon>Chenopodioideae</taxon>
        <taxon>Atripliceae</taxon>
        <taxon>Atriplex</taxon>
    </lineage>
</organism>
<dbReference type="EMBL" id="U18403">
    <property type="protein sequence ID" value="AAA86991.1"/>
    <property type="molecule type" value="mRNA"/>
</dbReference>
<dbReference type="SMR" id="P42767"/>
<dbReference type="GO" id="GO:0016020">
    <property type="term" value="C:membrane"/>
    <property type="evidence" value="ECO:0007669"/>
    <property type="project" value="UniProtKB-SubCell"/>
</dbReference>
<dbReference type="GO" id="GO:0015267">
    <property type="term" value="F:channel activity"/>
    <property type="evidence" value="ECO:0007669"/>
    <property type="project" value="InterPro"/>
</dbReference>
<dbReference type="CDD" id="cd00333">
    <property type="entry name" value="MIP"/>
    <property type="match status" value="1"/>
</dbReference>
<dbReference type="FunFam" id="1.20.1080.10:FF:000001">
    <property type="entry name" value="Probable aquaporin PIP1-2"/>
    <property type="match status" value="1"/>
</dbReference>
<dbReference type="Gene3D" id="1.20.1080.10">
    <property type="entry name" value="Glycerol uptake facilitator protein"/>
    <property type="match status" value="1"/>
</dbReference>
<dbReference type="InterPro" id="IPR023271">
    <property type="entry name" value="Aquaporin-like"/>
</dbReference>
<dbReference type="InterPro" id="IPR034294">
    <property type="entry name" value="Aquaporin_transptr"/>
</dbReference>
<dbReference type="InterPro" id="IPR000425">
    <property type="entry name" value="MIP"/>
</dbReference>
<dbReference type="InterPro" id="IPR022357">
    <property type="entry name" value="MIP_CS"/>
</dbReference>
<dbReference type="NCBIfam" id="TIGR00861">
    <property type="entry name" value="MIP"/>
    <property type="match status" value="1"/>
</dbReference>
<dbReference type="PANTHER" id="PTHR45687">
    <property type="entry name" value="AQUAPORIN OR AQUAGLYCEROPORIN RELATED"/>
    <property type="match status" value="1"/>
</dbReference>
<dbReference type="Pfam" id="PF00230">
    <property type="entry name" value="MIP"/>
    <property type="match status" value="1"/>
</dbReference>
<dbReference type="PRINTS" id="PR00783">
    <property type="entry name" value="MINTRINSICP"/>
</dbReference>
<dbReference type="SUPFAM" id="SSF81338">
    <property type="entry name" value="Aquaporin-like"/>
    <property type="match status" value="1"/>
</dbReference>
<dbReference type="PROSITE" id="PS00221">
    <property type="entry name" value="MIP"/>
    <property type="match status" value="1"/>
</dbReference>
<reference key="1">
    <citation type="journal article" date="1995" name="Plant Physiol.">
        <title>Nucleotide sequence of a cDNA for a water channel protein (aquaporin) homolog from Atriplex canescens (Pursh.) Nutt.</title>
        <authorList>
            <person name="Cairney J."/>
            <person name="Newton R.J."/>
            <person name="Funkhouser E.A."/>
            <person name="Chang S."/>
            <person name="Hayes D."/>
        </authorList>
    </citation>
    <scope>NUCLEOTIDE SEQUENCE [MRNA]</scope>
</reference>
<accession>P42767</accession>
<keyword id="KW-0472">Membrane</keyword>
<keyword id="KW-0677">Repeat</keyword>
<keyword id="KW-0812">Transmembrane</keyword>
<keyword id="KW-1133">Transmembrane helix</keyword>
<keyword id="KW-0813">Transport</keyword>
<sequence length="282" mass="30260">MSKEVISEEGQVHQHGKDYVDPPPAPFFDMGELKLWSFWRAAIAEFIATLLFLYITVATVIGYKKETDPCASVGLLGIAWSFGGMIFVLVYCTAGISGGHINPAVTFGLFLARKVSLLRALVYMIAQCAGAICGVGLVKAFMKGPYNQFGGGANSVALGYNKGTAFGAELIGTFVLVYTVFSATDPKRSARDSHVPILAPLPIGFAVFMVHLATIPITGTGINPARSFGAAVIYNKKRVWDDHWIFWVGPFVGALAAAAYHQYVLRAAAIKALGSFRSNPTN</sequence>
<name>PIP1_ATRCA</name>
<protein>
    <recommendedName>
        <fullName>Aquaporin PIP-type</fullName>
    </recommendedName>
</protein>
<comment type="function">
    <text>Water-specific channel.</text>
</comment>
<comment type="subcellular location">
    <subcellularLocation>
        <location>Membrane</location>
        <topology>Multi-pass membrane protein</topology>
    </subcellularLocation>
</comment>
<comment type="domain">
    <text>Aquaporins contain two tandem repeats each containing three membrane-spanning domains and a pore-forming loop with the signature motif Asn-Pro-Ala (NPA).</text>
</comment>
<comment type="similarity">
    <text evidence="2">Belongs to the MIP/aquaporin (TC 1.A.8) family. PIP (TC 1.A.8.11) subfamily.</text>
</comment>